<comment type="function">
    <text evidence="1">Participates in chromosomal partition during cell division. May act via the formation of a condensin-like complex containing Smc and ScpB that pull DNA away from mid-cell into both cell halves.</text>
</comment>
<comment type="subunit">
    <text evidence="1">Component of a cohesin-like complex composed of ScpA, ScpB and the Smc homodimer, in which ScpA and ScpB bind to the head domain of Smc. The presence of the three proteins is required for the association of the complex with DNA.</text>
</comment>
<comment type="subcellular location">
    <subcellularLocation>
        <location evidence="1">Cytoplasm</location>
    </subcellularLocation>
    <text evidence="1">Associated with two foci at the outer edges of the nucleoid region in young cells, and at four foci within both cell halves in older cells.</text>
</comment>
<comment type="similarity">
    <text evidence="1">Belongs to the ScpA family.</text>
</comment>
<evidence type="ECO:0000255" key="1">
    <source>
        <dbReference type="HAMAP-Rule" id="MF_01805"/>
    </source>
</evidence>
<proteinExistence type="inferred from homology"/>
<accession>Q5M622</accession>
<sequence>MDIKLKDFEGPLDLLLHLVSKYEVDIYDVPIVEVIEQYLAYLATLQAMKLEVAGEYMLMASQLMLIKSRKLLPTVVEDEPEADDPELELLSQLEEYAHFKAASQVLAKKHEVRAQYFSKPKVELVYEDVTLNQDKTIQDIFLAFSKIMAEKQEEIRRRHTTIARDDYKIEDMMLIIEEAFSAKNKLFLDELFSDAKDMNQVITLFLATLELIKIHRISVQQETIFGTITLRKEWTNE</sequence>
<keyword id="KW-0131">Cell cycle</keyword>
<keyword id="KW-0132">Cell division</keyword>
<keyword id="KW-0159">Chromosome partition</keyword>
<keyword id="KW-0963">Cytoplasm</keyword>
<keyword id="KW-1185">Reference proteome</keyword>
<name>SCPA_STRT2</name>
<protein>
    <recommendedName>
        <fullName evidence="1">Segregation and condensation protein A</fullName>
    </recommendedName>
</protein>
<gene>
    <name evidence="1" type="primary">scpA</name>
    <name type="ordered locus">stu0260</name>
</gene>
<organism>
    <name type="scientific">Streptococcus thermophilus (strain ATCC BAA-250 / LMG 18311)</name>
    <dbReference type="NCBI Taxonomy" id="264199"/>
    <lineage>
        <taxon>Bacteria</taxon>
        <taxon>Bacillati</taxon>
        <taxon>Bacillota</taxon>
        <taxon>Bacilli</taxon>
        <taxon>Lactobacillales</taxon>
        <taxon>Streptococcaceae</taxon>
        <taxon>Streptococcus</taxon>
    </lineage>
</organism>
<dbReference type="EMBL" id="CP000023">
    <property type="protein sequence ID" value="AAV59984.1"/>
    <property type="molecule type" value="Genomic_DNA"/>
</dbReference>
<dbReference type="RefSeq" id="WP_011225440.1">
    <property type="nucleotide sequence ID" value="NC_006448.1"/>
</dbReference>
<dbReference type="SMR" id="Q5M622"/>
<dbReference type="STRING" id="264199.stu0260"/>
<dbReference type="KEGG" id="stl:stu0260"/>
<dbReference type="eggNOG" id="COG1354">
    <property type="taxonomic scope" value="Bacteria"/>
</dbReference>
<dbReference type="HOGENOM" id="CLU_038686_3_3_9"/>
<dbReference type="Proteomes" id="UP000001170">
    <property type="component" value="Chromosome"/>
</dbReference>
<dbReference type="GO" id="GO:0005737">
    <property type="term" value="C:cytoplasm"/>
    <property type="evidence" value="ECO:0007669"/>
    <property type="project" value="UniProtKB-SubCell"/>
</dbReference>
<dbReference type="GO" id="GO:0051301">
    <property type="term" value="P:cell division"/>
    <property type="evidence" value="ECO:0007669"/>
    <property type="project" value="UniProtKB-KW"/>
</dbReference>
<dbReference type="GO" id="GO:0007059">
    <property type="term" value="P:chromosome segregation"/>
    <property type="evidence" value="ECO:0007669"/>
    <property type="project" value="UniProtKB-UniRule"/>
</dbReference>
<dbReference type="GO" id="GO:0006260">
    <property type="term" value="P:DNA replication"/>
    <property type="evidence" value="ECO:0007669"/>
    <property type="project" value="UniProtKB-UniRule"/>
</dbReference>
<dbReference type="Gene3D" id="6.10.250.2410">
    <property type="match status" value="1"/>
</dbReference>
<dbReference type="HAMAP" id="MF_01805">
    <property type="entry name" value="ScpA"/>
    <property type="match status" value="1"/>
</dbReference>
<dbReference type="InterPro" id="IPR003768">
    <property type="entry name" value="ScpA"/>
</dbReference>
<dbReference type="NCBIfam" id="NF000993">
    <property type="entry name" value="PRK00104.1-2"/>
    <property type="match status" value="1"/>
</dbReference>
<dbReference type="PANTHER" id="PTHR33969">
    <property type="entry name" value="SEGREGATION AND CONDENSATION PROTEIN A"/>
    <property type="match status" value="1"/>
</dbReference>
<dbReference type="PANTHER" id="PTHR33969:SF2">
    <property type="entry name" value="SEGREGATION AND CONDENSATION PROTEIN A"/>
    <property type="match status" value="1"/>
</dbReference>
<dbReference type="Pfam" id="PF02616">
    <property type="entry name" value="SMC_ScpA"/>
    <property type="match status" value="1"/>
</dbReference>
<reference key="1">
    <citation type="journal article" date="2004" name="Nat. Biotechnol.">
        <title>Complete sequence and comparative genome analysis of the dairy bacterium Streptococcus thermophilus.</title>
        <authorList>
            <person name="Bolotin A."/>
            <person name="Quinquis B."/>
            <person name="Renault P."/>
            <person name="Sorokin A."/>
            <person name="Ehrlich S.D."/>
            <person name="Kulakauskas S."/>
            <person name="Lapidus A."/>
            <person name="Goltsman E."/>
            <person name="Mazur M."/>
            <person name="Pusch G.D."/>
            <person name="Fonstein M."/>
            <person name="Overbeek R."/>
            <person name="Kyprides N."/>
            <person name="Purnelle B."/>
            <person name="Prozzi D."/>
            <person name="Ngui K."/>
            <person name="Masuy D."/>
            <person name="Hancy F."/>
            <person name="Burteau S."/>
            <person name="Boutry M."/>
            <person name="Delcour J."/>
            <person name="Goffeau A."/>
            <person name="Hols P."/>
        </authorList>
    </citation>
    <scope>NUCLEOTIDE SEQUENCE [LARGE SCALE GENOMIC DNA]</scope>
    <source>
        <strain>ATCC BAA-250 / LMG 18311</strain>
    </source>
</reference>
<feature type="chain" id="PRO_1000069990" description="Segregation and condensation protein A">
    <location>
        <begin position="1"/>
        <end position="237"/>
    </location>
</feature>